<sequence>MSPDRTGRGSSSSSSSLKRLVCKSFVRAWGRRRPNLRRAVLLICTASAIYGIVIASQVLRGSTHPGKALRKAQQKVLTDASVRLAGTALEGNTFYMENAQPQGGSTSSSPVTLQPNVVYITLKTKRSKPANIRGTVRPKKRRKYGARRPGVVQDTESKKDTLWSKVPNSQHKSQAQSWIRGIDGHRGGRGTHQSNIRIYSDSAPPWFTKEDISAMRFLSDSRIGHIKQNLLLFESDQTPLMKMPVPPVGSGDCQGQCGVIKRPLDMSEVFAFHLDRVLGLNRTLPSVSRSLEFVQDGQPCPVILWDPSLLPTDNKTQSSIKLKWGTYQEMLRHKCWLNGKAPKADLGCTEIHHQEWCKMALFDFLLQVYTRLDR</sequence>
<feature type="chain" id="PRO_0000376008" description="Golgi-associated kinase 1B">
    <location>
        <begin position="1"/>
        <end position="374" status="greater than"/>
    </location>
</feature>
<feature type="topological domain" description="Cytoplasmic" evidence="3">
    <location>
        <begin position="1"/>
        <end position="38"/>
    </location>
</feature>
<feature type="transmembrane region" description="Helical; Signal-anchor for type II membrane protein" evidence="3">
    <location>
        <begin position="39"/>
        <end position="61"/>
    </location>
</feature>
<feature type="topological domain" description="Extracellular" evidence="3">
    <location>
        <begin position="62"/>
        <end position="374"/>
    </location>
</feature>
<feature type="region of interest" description="Disordered" evidence="4">
    <location>
        <begin position="136"/>
        <end position="177"/>
    </location>
</feature>
<feature type="compositionally biased region" description="Basic residues" evidence="4">
    <location>
        <begin position="136"/>
        <end position="146"/>
    </location>
</feature>
<feature type="compositionally biased region" description="Polar residues" evidence="4">
    <location>
        <begin position="166"/>
        <end position="177"/>
    </location>
</feature>
<feature type="glycosylation site" description="N-linked (GlcNAc...) asparagine" evidence="3">
    <location>
        <position position="281"/>
    </location>
</feature>
<feature type="glycosylation site" description="N-linked (GlcNAc...) asparagine" evidence="3">
    <location>
        <position position="314"/>
    </location>
</feature>
<feature type="non-terminal residue" evidence="6">
    <location>
        <position position="374"/>
    </location>
</feature>
<organism>
    <name type="scientific">Xenopus laevis</name>
    <name type="common">African clawed frog</name>
    <dbReference type="NCBI Taxonomy" id="8355"/>
    <lineage>
        <taxon>Eukaryota</taxon>
        <taxon>Metazoa</taxon>
        <taxon>Chordata</taxon>
        <taxon>Craniata</taxon>
        <taxon>Vertebrata</taxon>
        <taxon>Euteleostomi</taxon>
        <taxon>Amphibia</taxon>
        <taxon>Batrachia</taxon>
        <taxon>Anura</taxon>
        <taxon>Pipoidea</taxon>
        <taxon>Pipidae</taxon>
        <taxon>Xenopodinae</taxon>
        <taxon>Xenopus</taxon>
        <taxon>Xenopus</taxon>
    </lineage>
</organism>
<name>GAK1B_XENLA</name>
<dbReference type="EMBL" id="EU746496">
    <property type="status" value="NOT_ANNOTATED_CDS"/>
    <property type="molecule type" value="mRNA"/>
</dbReference>
<dbReference type="GlyCosmos" id="P86275">
    <property type="glycosylation" value="2 sites, No reported glycans"/>
</dbReference>
<dbReference type="AGR" id="Xenbase:XB-GENE-6360290"/>
<dbReference type="Xenbase" id="XB-GENE-6360290">
    <property type="gene designation" value="gask1b.S"/>
</dbReference>
<dbReference type="Proteomes" id="UP000186698">
    <property type="component" value="Unplaced"/>
</dbReference>
<dbReference type="GO" id="GO:0005794">
    <property type="term" value="C:Golgi apparatus"/>
    <property type="evidence" value="ECO:0000318"/>
    <property type="project" value="GO_Central"/>
</dbReference>
<dbReference type="GO" id="GO:0000139">
    <property type="term" value="C:Golgi membrane"/>
    <property type="evidence" value="ECO:0007669"/>
    <property type="project" value="UniProtKB-SubCell"/>
</dbReference>
<dbReference type="InterPro" id="IPR029207">
    <property type="entry name" value="FAM198"/>
</dbReference>
<dbReference type="PANTHER" id="PTHR15905:SF1">
    <property type="entry name" value="GOLGI-ASSOCIATED KINASE 1B"/>
    <property type="match status" value="1"/>
</dbReference>
<dbReference type="PANTHER" id="PTHR15905">
    <property type="entry name" value="GOLGI-ASSOCIATED KINASE 1B-RELATED"/>
    <property type="match status" value="1"/>
</dbReference>
<dbReference type="Pfam" id="PF15051">
    <property type="entry name" value="FAM198"/>
    <property type="match status" value="1"/>
</dbReference>
<keyword id="KW-0325">Glycoprotein</keyword>
<keyword id="KW-0333">Golgi apparatus</keyword>
<keyword id="KW-0472">Membrane</keyword>
<keyword id="KW-1185">Reference proteome</keyword>
<keyword id="KW-0735">Signal-anchor</keyword>
<keyword id="KW-0812">Transmembrane</keyword>
<keyword id="KW-1133">Transmembrane helix</keyword>
<reference evidence="7" key="1">
    <citation type="journal article" date="2008" name="Int. J. Dev. Biol.">
        <title>Expression of the novel gene Ened during mouse and Xenopus embryonic development.</title>
        <authorList>
            <person name="Meszaros R."/>
            <person name="Strate I."/>
            <person name="Pera E.M."/>
            <person name="Durbeej M."/>
        </authorList>
    </citation>
    <scope>NUCLEOTIDE SEQUENCE [MRNA]</scope>
    <scope>DEVELOPMENTAL STAGE</scope>
</reference>
<gene>
    <name evidence="1" type="primary">gask1b</name>
    <name evidence="6" type="synonym">ened</name>
    <name evidence="1" type="synonym">fam198b</name>
</gene>
<evidence type="ECO:0000250" key="1">
    <source>
        <dbReference type="UniProtKB" id="Q3UPI1"/>
    </source>
</evidence>
<evidence type="ECO:0000250" key="2">
    <source>
        <dbReference type="UniProtKB" id="Q6UWH4"/>
    </source>
</evidence>
<evidence type="ECO:0000255" key="3"/>
<evidence type="ECO:0000256" key="4">
    <source>
        <dbReference type="SAM" id="MobiDB-lite"/>
    </source>
</evidence>
<evidence type="ECO:0000269" key="5">
    <source>
    </source>
</evidence>
<evidence type="ECO:0000303" key="6">
    <source>
    </source>
</evidence>
<evidence type="ECO:0000305" key="7"/>
<proteinExistence type="evidence at transcript level"/>
<accession>P86275</accession>
<protein>
    <recommendedName>
        <fullName evidence="1">Golgi-associated kinase 1B</fullName>
    </recommendedName>
    <alternativeName>
        <fullName evidence="6">Expressed in nerve and epithelium during development</fullName>
    </alternativeName>
    <alternativeName>
        <fullName evidence="1">Protein FAM198B</fullName>
    </alternativeName>
</protein>
<comment type="subcellular location">
    <subcellularLocation>
        <location evidence="2">Golgi apparatus membrane</location>
        <topology evidence="2">Single-pass type II membrane protein</topology>
    </subcellularLocation>
</comment>
<comment type="developmental stage">
    <text evidence="5">Low maternal levels detected at the 4-cell stage (PubMed:18956345). At gastrulation, uniformly expressed in the animal cap and marginal zone (PubMed:18956345). During neurulation, expressed in the notochord, underlying gastrocoel roof plate and ventral epidermis (PubMed:18956345). In tailbud embryos, expression is maintained in the notochord and is also found in the anterior brain, eye and head mesenchyme and in the heart, dermomyotome, pronephros, lateral blood islands and proctodeum (PubMed:18956345). Expression persists in head tissues, heart and notochord in late tailbud stages (PubMed:18956345).</text>
</comment>
<comment type="similarity">
    <text evidence="7">Belongs to the GASK family.</text>
</comment>